<keyword id="KW-0028">Amino-acid biosynthesis</keyword>
<keyword id="KW-0055">Arginine biosynthesis</keyword>
<keyword id="KW-0963">Cytoplasm</keyword>
<keyword id="KW-0456">Lyase</keyword>
<gene>
    <name evidence="1" type="primary">argH</name>
    <name type="ordered locus">SH1990</name>
</gene>
<accession>Q4L4X6</accession>
<sequence>MSSKAWGGRFQQQPEDWVDEFNASIDFDQTLLDEDVQGSIAHATMLANQNIISQDDKDAIINGLKEIQQDFHNGKLAFKKSLEDIHLNIEHELIQRVGDAGGKLHTGRSRNDQVATDLHLYVKKEVLEIQDLIRSFQTSILKLAQSHVDTIMPGYTHLQRAQPISFAHHVMTYFWMLERDYSRFVDSMKRIDISPLGAAALSGTTHPIDRHETQQLLEFSSVYENSLDAVSDRDYIIETLHNISLTMIHLSRFAEEIIFWSTDEAKFITLSDAFSTGSSIMPQKKNPDMAELIRGKVGRATGHLMSMLVTLKGLPLAYNKDLQEDKEGLFDSVRTIKGSLRIFEGMLDTMTVNTDRLNETVHQDFSNATELADYLVAKDVPFRKAHEIVGKIVFECIQQGIYLLDVPLERYKELNSNIDQDVYDYLKPENCLSRRKSYGSTGQDAVRHQLKVAEKLLNND</sequence>
<organism>
    <name type="scientific">Staphylococcus haemolyticus (strain JCSC1435)</name>
    <dbReference type="NCBI Taxonomy" id="279808"/>
    <lineage>
        <taxon>Bacteria</taxon>
        <taxon>Bacillati</taxon>
        <taxon>Bacillota</taxon>
        <taxon>Bacilli</taxon>
        <taxon>Bacillales</taxon>
        <taxon>Staphylococcaceae</taxon>
        <taxon>Staphylococcus</taxon>
    </lineage>
</organism>
<comment type="catalytic activity">
    <reaction evidence="1">
        <text>2-(N(omega)-L-arginino)succinate = fumarate + L-arginine</text>
        <dbReference type="Rhea" id="RHEA:24020"/>
        <dbReference type="ChEBI" id="CHEBI:29806"/>
        <dbReference type="ChEBI" id="CHEBI:32682"/>
        <dbReference type="ChEBI" id="CHEBI:57472"/>
        <dbReference type="EC" id="4.3.2.1"/>
    </reaction>
</comment>
<comment type="pathway">
    <text evidence="1">Amino-acid biosynthesis; L-arginine biosynthesis; L-arginine from L-ornithine and carbamoyl phosphate: step 3/3.</text>
</comment>
<comment type="subcellular location">
    <subcellularLocation>
        <location evidence="1">Cytoplasm</location>
    </subcellularLocation>
</comment>
<comment type="similarity">
    <text evidence="1">Belongs to the lyase 1 family. Argininosuccinate lyase subfamily.</text>
</comment>
<protein>
    <recommendedName>
        <fullName evidence="1">Argininosuccinate lyase</fullName>
        <shortName evidence="1">ASAL</shortName>
        <ecNumber evidence="1">4.3.2.1</ecNumber>
    </recommendedName>
    <alternativeName>
        <fullName evidence="1">Arginosuccinase</fullName>
    </alternativeName>
</protein>
<name>ARLY_STAHJ</name>
<proteinExistence type="inferred from homology"/>
<feature type="chain" id="PRO_0000240775" description="Argininosuccinate lyase">
    <location>
        <begin position="1"/>
        <end position="460"/>
    </location>
</feature>
<evidence type="ECO:0000255" key="1">
    <source>
        <dbReference type="HAMAP-Rule" id="MF_00006"/>
    </source>
</evidence>
<dbReference type="EC" id="4.3.2.1" evidence="1"/>
<dbReference type="EMBL" id="AP006716">
    <property type="protein sequence ID" value="BAE05299.1"/>
    <property type="molecule type" value="Genomic_DNA"/>
</dbReference>
<dbReference type="RefSeq" id="WP_011276257.1">
    <property type="nucleotide sequence ID" value="NC_007168.1"/>
</dbReference>
<dbReference type="SMR" id="Q4L4X6"/>
<dbReference type="GeneID" id="93781350"/>
<dbReference type="KEGG" id="sha:SH1990"/>
<dbReference type="eggNOG" id="COG0165">
    <property type="taxonomic scope" value="Bacteria"/>
</dbReference>
<dbReference type="HOGENOM" id="CLU_027272_2_3_9"/>
<dbReference type="OrthoDB" id="9769623at2"/>
<dbReference type="UniPathway" id="UPA00068">
    <property type="reaction ID" value="UER00114"/>
</dbReference>
<dbReference type="Proteomes" id="UP000000543">
    <property type="component" value="Chromosome"/>
</dbReference>
<dbReference type="GO" id="GO:0005829">
    <property type="term" value="C:cytosol"/>
    <property type="evidence" value="ECO:0007669"/>
    <property type="project" value="TreeGrafter"/>
</dbReference>
<dbReference type="GO" id="GO:0004056">
    <property type="term" value="F:argininosuccinate lyase activity"/>
    <property type="evidence" value="ECO:0007669"/>
    <property type="project" value="UniProtKB-UniRule"/>
</dbReference>
<dbReference type="GO" id="GO:0042450">
    <property type="term" value="P:arginine biosynthetic process via ornithine"/>
    <property type="evidence" value="ECO:0007669"/>
    <property type="project" value="InterPro"/>
</dbReference>
<dbReference type="GO" id="GO:0006526">
    <property type="term" value="P:L-arginine biosynthetic process"/>
    <property type="evidence" value="ECO:0007669"/>
    <property type="project" value="UniProtKB-UniRule"/>
</dbReference>
<dbReference type="CDD" id="cd01359">
    <property type="entry name" value="Argininosuccinate_lyase"/>
    <property type="match status" value="1"/>
</dbReference>
<dbReference type="FunFam" id="1.10.275.10:FF:000002">
    <property type="entry name" value="Argininosuccinate lyase"/>
    <property type="match status" value="1"/>
</dbReference>
<dbReference type="FunFam" id="1.10.40.30:FF:000001">
    <property type="entry name" value="Argininosuccinate lyase"/>
    <property type="match status" value="1"/>
</dbReference>
<dbReference type="FunFam" id="1.20.200.10:FF:000015">
    <property type="entry name" value="argininosuccinate lyase isoform X2"/>
    <property type="match status" value="1"/>
</dbReference>
<dbReference type="Gene3D" id="1.10.40.30">
    <property type="entry name" value="Fumarase/aspartase (C-terminal domain)"/>
    <property type="match status" value="1"/>
</dbReference>
<dbReference type="Gene3D" id="1.20.200.10">
    <property type="entry name" value="Fumarase/aspartase (Central domain)"/>
    <property type="match status" value="1"/>
</dbReference>
<dbReference type="Gene3D" id="1.10.275.10">
    <property type="entry name" value="Fumarase/aspartase (N-terminal domain)"/>
    <property type="match status" value="1"/>
</dbReference>
<dbReference type="HAMAP" id="MF_00006">
    <property type="entry name" value="Arg_succ_lyase"/>
    <property type="match status" value="1"/>
</dbReference>
<dbReference type="InterPro" id="IPR029419">
    <property type="entry name" value="Arg_succ_lyase_C"/>
</dbReference>
<dbReference type="InterPro" id="IPR009049">
    <property type="entry name" value="Argininosuccinate_lyase"/>
</dbReference>
<dbReference type="InterPro" id="IPR024083">
    <property type="entry name" value="Fumarase/histidase_N"/>
</dbReference>
<dbReference type="InterPro" id="IPR020557">
    <property type="entry name" value="Fumarate_lyase_CS"/>
</dbReference>
<dbReference type="InterPro" id="IPR000362">
    <property type="entry name" value="Fumarate_lyase_fam"/>
</dbReference>
<dbReference type="InterPro" id="IPR022761">
    <property type="entry name" value="Fumarate_lyase_N"/>
</dbReference>
<dbReference type="InterPro" id="IPR008948">
    <property type="entry name" value="L-Aspartase-like"/>
</dbReference>
<dbReference type="NCBIfam" id="TIGR00838">
    <property type="entry name" value="argH"/>
    <property type="match status" value="1"/>
</dbReference>
<dbReference type="PANTHER" id="PTHR43814">
    <property type="entry name" value="ARGININOSUCCINATE LYASE"/>
    <property type="match status" value="1"/>
</dbReference>
<dbReference type="PANTHER" id="PTHR43814:SF1">
    <property type="entry name" value="ARGININOSUCCINATE LYASE"/>
    <property type="match status" value="1"/>
</dbReference>
<dbReference type="Pfam" id="PF14698">
    <property type="entry name" value="ASL_C2"/>
    <property type="match status" value="1"/>
</dbReference>
<dbReference type="Pfam" id="PF00206">
    <property type="entry name" value="Lyase_1"/>
    <property type="match status" value="1"/>
</dbReference>
<dbReference type="PRINTS" id="PR00145">
    <property type="entry name" value="ARGSUCLYASE"/>
</dbReference>
<dbReference type="PRINTS" id="PR00149">
    <property type="entry name" value="FUMRATELYASE"/>
</dbReference>
<dbReference type="SUPFAM" id="SSF48557">
    <property type="entry name" value="L-aspartase-like"/>
    <property type="match status" value="1"/>
</dbReference>
<dbReference type="PROSITE" id="PS00163">
    <property type="entry name" value="FUMARATE_LYASES"/>
    <property type="match status" value="1"/>
</dbReference>
<reference key="1">
    <citation type="journal article" date="2005" name="J. Bacteriol.">
        <title>Whole-genome sequencing of Staphylococcus haemolyticus uncovers the extreme plasticity of its genome and the evolution of human-colonizing staphylococcal species.</title>
        <authorList>
            <person name="Takeuchi F."/>
            <person name="Watanabe S."/>
            <person name="Baba T."/>
            <person name="Yuzawa H."/>
            <person name="Ito T."/>
            <person name="Morimoto Y."/>
            <person name="Kuroda M."/>
            <person name="Cui L."/>
            <person name="Takahashi M."/>
            <person name="Ankai A."/>
            <person name="Baba S."/>
            <person name="Fukui S."/>
            <person name="Lee J.C."/>
            <person name="Hiramatsu K."/>
        </authorList>
    </citation>
    <scope>NUCLEOTIDE SEQUENCE [LARGE SCALE GENOMIC DNA]</scope>
    <source>
        <strain>JCSC1435</strain>
    </source>
</reference>